<reference key="1">
    <citation type="journal article" date="2001" name="Proc. Natl. Acad. Sci. U.S.A.">
        <title>Nuclear envelope proteomics: novel integral membrane proteins of the inner nuclear membrane.</title>
        <authorList>
            <person name="Dreger M."/>
            <person name="Bengtsson L."/>
            <person name="Schoeneberg T."/>
            <person name="Otto H."/>
            <person name="Hucho F."/>
        </authorList>
    </citation>
    <scope>NUCLEOTIDE SEQUENCE [MRNA]</scope>
    <scope>IDENTIFICATION BY MASS SPECTROMETRY</scope>
    <scope>SUBCELLULAR LOCATION</scope>
</reference>
<reference key="2">
    <citation type="journal article" date="2005" name="Science">
        <title>The transcriptional landscape of the mammalian genome.</title>
        <authorList>
            <person name="Carninci P."/>
            <person name="Kasukawa T."/>
            <person name="Katayama S."/>
            <person name="Gough J."/>
            <person name="Frith M.C."/>
            <person name="Maeda N."/>
            <person name="Oyama R."/>
            <person name="Ravasi T."/>
            <person name="Lenhard B."/>
            <person name="Wells C."/>
            <person name="Kodzius R."/>
            <person name="Shimokawa K."/>
            <person name="Bajic V.B."/>
            <person name="Brenner S.E."/>
            <person name="Batalov S."/>
            <person name="Forrest A.R."/>
            <person name="Zavolan M."/>
            <person name="Davis M.J."/>
            <person name="Wilming L.G."/>
            <person name="Aidinis V."/>
            <person name="Allen J.E."/>
            <person name="Ambesi-Impiombato A."/>
            <person name="Apweiler R."/>
            <person name="Aturaliya R.N."/>
            <person name="Bailey T.L."/>
            <person name="Bansal M."/>
            <person name="Baxter L."/>
            <person name="Beisel K.W."/>
            <person name="Bersano T."/>
            <person name="Bono H."/>
            <person name="Chalk A.M."/>
            <person name="Chiu K.P."/>
            <person name="Choudhary V."/>
            <person name="Christoffels A."/>
            <person name="Clutterbuck D.R."/>
            <person name="Crowe M.L."/>
            <person name="Dalla E."/>
            <person name="Dalrymple B.P."/>
            <person name="de Bono B."/>
            <person name="Della Gatta G."/>
            <person name="di Bernardo D."/>
            <person name="Down T."/>
            <person name="Engstrom P."/>
            <person name="Fagiolini M."/>
            <person name="Faulkner G."/>
            <person name="Fletcher C.F."/>
            <person name="Fukushima T."/>
            <person name="Furuno M."/>
            <person name="Futaki S."/>
            <person name="Gariboldi M."/>
            <person name="Georgii-Hemming P."/>
            <person name="Gingeras T.R."/>
            <person name="Gojobori T."/>
            <person name="Green R.E."/>
            <person name="Gustincich S."/>
            <person name="Harbers M."/>
            <person name="Hayashi Y."/>
            <person name="Hensch T.K."/>
            <person name="Hirokawa N."/>
            <person name="Hill D."/>
            <person name="Huminiecki L."/>
            <person name="Iacono M."/>
            <person name="Ikeo K."/>
            <person name="Iwama A."/>
            <person name="Ishikawa T."/>
            <person name="Jakt M."/>
            <person name="Kanapin A."/>
            <person name="Katoh M."/>
            <person name="Kawasawa Y."/>
            <person name="Kelso J."/>
            <person name="Kitamura H."/>
            <person name="Kitano H."/>
            <person name="Kollias G."/>
            <person name="Krishnan S.P."/>
            <person name="Kruger A."/>
            <person name="Kummerfeld S.K."/>
            <person name="Kurochkin I.V."/>
            <person name="Lareau L.F."/>
            <person name="Lazarevic D."/>
            <person name="Lipovich L."/>
            <person name="Liu J."/>
            <person name="Liuni S."/>
            <person name="McWilliam S."/>
            <person name="Madan Babu M."/>
            <person name="Madera M."/>
            <person name="Marchionni L."/>
            <person name="Matsuda H."/>
            <person name="Matsuzawa S."/>
            <person name="Miki H."/>
            <person name="Mignone F."/>
            <person name="Miyake S."/>
            <person name="Morris K."/>
            <person name="Mottagui-Tabar S."/>
            <person name="Mulder N."/>
            <person name="Nakano N."/>
            <person name="Nakauchi H."/>
            <person name="Ng P."/>
            <person name="Nilsson R."/>
            <person name="Nishiguchi S."/>
            <person name="Nishikawa S."/>
            <person name="Nori F."/>
            <person name="Ohara O."/>
            <person name="Okazaki Y."/>
            <person name="Orlando V."/>
            <person name="Pang K.C."/>
            <person name="Pavan W.J."/>
            <person name="Pavesi G."/>
            <person name="Pesole G."/>
            <person name="Petrovsky N."/>
            <person name="Piazza S."/>
            <person name="Reed J."/>
            <person name="Reid J.F."/>
            <person name="Ring B.Z."/>
            <person name="Ringwald M."/>
            <person name="Rost B."/>
            <person name="Ruan Y."/>
            <person name="Salzberg S.L."/>
            <person name="Sandelin A."/>
            <person name="Schneider C."/>
            <person name="Schoenbach C."/>
            <person name="Sekiguchi K."/>
            <person name="Semple C.A."/>
            <person name="Seno S."/>
            <person name="Sessa L."/>
            <person name="Sheng Y."/>
            <person name="Shibata Y."/>
            <person name="Shimada H."/>
            <person name="Shimada K."/>
            <person name="Silva D."/>
            <person name="Sinclair B."/>
            <person name="Sperling S."/>
            <person name="Stupka E."/>
            <person name="Sugiura K."/>
            <person name="Sultana R."/>
            <person name="Takenaka Y."/>
            <person name="Taki K."/>
            <person name="Tammoja K."/>
            <person name="Tan S.L."/>
            <person name="Tang S."/>
            <person name="Taylor M.S."/>
            <person name="Tegner J."/>
            <person name="Teichmann S.A."/>
            <person name="Ueda H.R."/>
            <person name="van Nimwegen E."/>
            <person name="Verardo R."/>
            <person name="Wei C.L."/>
            <person name="Yagi K."/>
            <person name="Yamanishi H."/>
            <person name="Zabarovsky E."/>
            <person name="Zhu S."/>
            <person name="Zimmer A."/>
            <person name="Hide W."/>
            <person name="Bult C."/>
            <person name="Grimmond S.M."/>
            <person name="Teasdale R.D."/>
            <person name="Liu E.T."/>
            <person name="Brusic V."/>
            <person name="Quackenbush J."/>
            <person name="Wahlestedt C."/>
            <person name="Mattick J.S."/>
            <person name="Hume D.A."/>
            <person name="Kai C."/>
            <person name="Sasaki D."/>
            <person name="Tomaru Y."/>
            <person name="Fukuda S."/>
            <person name="Kanamori-Katayama M."/>
            <person name="Suzuki M."/>
            <person name="Aoki J."/>
            <person name="Arakawa T."/>
            <person name="Iida J."/>
            <person name="Imamura K."/>
            <person name="Itoh M."/>
            <person name="Kato T."/>
            <person name="Kawaji H."/>
            <person name="Kawagashira N."/>
            <person name="Kawashima T."/>
            <person name="Kojima M."/>
            <person name="Kondo S."/>
            <person name="Konno H."/>
            <person name="Nakano K."/>
            <person name="Ninomiya N."/>
            <person name="Nishio T."/>
            <person name="Okada M."/>
            <person name="Plessy C."/>
            <person name="Shibata K."/>
            <person name="Shiraki T."/>
            <person name="Suzuki S."/>
            <person name="Tagami M."/>
            <person name="Waki K."/>
            <person name="Watahiki A."/>
            <person name="Okamura-Oho Y."/>
            <person name="Suzuki H."/>
            <person name="Kawai J."/>
            <person name="Hayashizaki Y."/>
        </authorList>
    </citation>
    <scope>NUCLEOTIDE SEQUENCE [LARGE SCALE MRNA]</scope>
    <source>
        <strain>C57BL/6J</strain>
        <tissue>Bone marrow</tissue>
        <tissue>Kidney</tissue>
        <tissue>Lung</tissue>
    </source>
</reference>
<reference key="3">
    <citation type="journal article" date="2004" name="Genome Res.">
        <title>The status, quality, and expansion of the NIH full-length cDNA project: the Mammalian Gene Collection (MGC).</title>
        <authorList>
            <consortium name="The MGC Project Team"/>
        </authorList>
    </citation>
    <scope>NUCLEOTIDE SEQUENCE [LARGE SCALE MRNA]</scope>
    <source>
        <strain>Czech II</strain>
        <tissue>Mammary tumor</tissue>
    </source>
</reference>
<reference key="4">
    <citation type="journal article" date="2008" name="J. Cell Sci.">
        <title>LUMA interacts with emerin and influences its distribution at the inner nuclear membrane.</title>
        <authorList>
            <person name="Bengtsson L."/>
            <person name="Otto H."/>
        </authorList>
    </citation>
    <scope>INTERACTION WITH EMD</scope>
    <scope>LMNA</scope>
    <scope>LMNB2</scope>
    <scope>FUNCTION</scope>
    <scope>SUBCELLULAR LOCATION</scope>
</reference>
<reference key="5">
    <citation type="journal article" date="2010" name="Cell">
        <title>A tissue-specific atlas of mouse protein phosphorylation and expression.</title>
        <authorList>
            <person name="Huttlin E.L."/>
            <person name="Jedrychowski M.P."/>
            <person name="Elias J.E."/>
            <person name="Goswami T."/>
            <person name="Rad R."/>
            <person name="Beausoleil S.A."/>
            <person name="Villen J."/>
            <person name="Haas W."/>
            <person name="Sowa M.E."/>
            <person name="Gygi S.P."/>
        </authorList>
    </citation>
    <scope>IDENTIFICATION BY MASS SPECTROMETRY [LARGE SCALE ANALYSIS]</scope>
    <source>
        <tissue>Brown adipose tissue</tissue>
        <tissue>Heart</tissue>
        <tissue>Kidney</tissue>
        <tissue>Liver</tissue>
        <tissue>Lung</tissue>
        <tissue>Pancreas</tissue>
        <tissue>Spleen</tissue>
        <tissue>Testis</tissue>
    </source>
</reference>
<reference key="6">
    <citation type="journal article" date="2021" name="Proc. Natl. Acad. Sci. U.S.A.">
        <title>A nonsense TMEM43 variant leads to disruption of connexin-linked function and autosomal dominant auditory neuropathy spectrum disorder.</title>
        <authorList>
            <person name="Jang M.W."/>
            <person name="Oh D.Y."/>
            <person name="Yi E."/>
            <person name="Liu X."/>
            <person name="Ling J."/>
            <person name="Kim N."/>
            <person name="Sharma K."/>
            <person name="Kim T.Y."/>
            <person name="Lee S."/>
            <person name="Kim A.R."/>
            <person name="Kim M.Y."/>
            <person name="Kim M.A."/>
            <person name="Lee M."/>
            <person name="Han J.H."/>
            <person name="Han J.J."/>
            <person name="Park H.R."/>
            <person name="Kim B.J."/>
            <person name="Lee S.Y."/>
            <person name="Woo D.H."/>
            <person name="Oh J."/>
            <person name="Oh S.J."/>
            <person name="Du T."/>
            <person name="Koo J.W."/>
            <person name="Oh S.H."/>
            <person name="Shin H.W."/>
            <person name="Seong M.W."/>
            <person name="Lee K.Y."/>
            <person name="Kim U.K."/>
            <person name="Shin J.B."/>
            <person name="Sang S."/>
            <person name="Cai X."/>
            <person name="Mei L."/>
            <person name="He C."/>
            <person name="Blanton S.H."/>
            <person name="Chen Z.Y."/>
            <person name="Chen H."/>
            <person name="Liu X."/>
            <person name="Nourbakhsh A."/>
            <person name="Huang Z."/>
            <person name="Kang K.W."/>
            <person name="Park W.Y."/>
            <person name="Feng Y."/>
            <person name="Lee C.J."/>
            <person name="Choi B.Y."/>
        </authorList>
    </citation>
    <scope>FUNCTION</scope>
    <scope>TISSUE SPECIFICITY</scope>
    <scope>DEVELOPMENTAL STAGE</scope>
</reference>
<gene>
    <name type="primary">Tmem43</name>
</gene>
<proteinExistence type="evidence at protein level"/>
<sequence>MAANYSSTSSRKEHVKVTSEPQPGFLERLSETSGGMFVGLMTFLLSFYLIFTNEGRALKTATSLAEGLSLVVSPDSIHSVAPENEGRLVHIIGALRTSKLLSDPNYGVHLPAVKLRRHVEMYQWVETEESSEYTEDGQVKKETKYSYNTEWRSEIVNSRNFDREIGHKNPSAMAVESFTATAPFVQIGRFFLSAGLIDKIDNFKALSLAKLEDPHVDIIRRGDFFYHSENPKYPEVGDVRVSFSYAGLSSDDPDLGPAHVVTVIARQRGDQLIPYSTKSGDTLLLLHHGDFSAEEVFRREQKSNSMKTWGLRAAGWMAMFMGLNLMTRILYTLVDWFPVFRDLVNIGLKAFAFCVATSLTLLTVAAGWLFYRPLWAALIGCLALVPIIIARTRVPAKKLE</sequence>
<accession>Q9DBS1</accession>
<keyword id="KW-0007">Acetylation</keyword>
<keyword id="KW-1003">Cell membrane</keyword>
<keyword id="KW-0256">Endoplasmic reticulum</keyword>
<keyword id="KW-0391">Immunity</keyword>
<keyword id="KW-0399">Innate immunity</keyword>
<keyword id="KW-0472">Membrane</keyword>
<keyword id="KW-0539">Nucleus</keyword>
<keyword id="KW-1185">Reference proteome</keyword>
<keyword id="KW-0812">Transmembrane</keyword>
<keyword id="KW-1133">Transmembrane helix</keyword>
<organism>
    <name type="scientific">Mus musculus</name>
    <name type="common">Mouse</name>
    <dbReference type="NCBI Taxonomy" id="10090"/>
    <lineage>
        <taxon>Eukaryota</taxon>
        <taxon>Metazoa</taxon>
        <taxon>Chordata</taxon>
        <taxon>Craniata</taxon>
        <taxon>Vertebrata</taxon>
        <taxon>Euteleostomi</taxon>
        <taxon>Mammalia</taxon>
        <taxon>Eutheria</taxon>
        <taxon>Euarchontoglires</taxon>
        <taxon>Glires</taxon>
        <taxon>Rodentia</taxon>
        <taxon>Myomorpha</taxon>
        <taxon>Muroidea</taxon>
        <taxon>Muridae</taxon>
        <taxon>Murinae</taxon>
        <taxon>Mus</taxon>
        <taxon>Mus</taxon>
    </lineage>
</organism>
<protein>
    <recommendedName>
        <fullName>Transmembrane protein 43</fullName>
    </recommendedName>
    <alternativeName>
        <fullName>Protein LUMA</fullName>
    </alternativeName>
</protein>
<name>TMM43_MOUSE</name>
<evidence type="ECO:0000250" key="1"/>
<evidence type="ECO:0000250" key="2">
    <source>
        <dbReference type="UniProtKB" id="Q9BTV4"/>
    </source>
</evidence>
<evidence type="ECO:0000255" key="3"/>
<evidence type="ECO:0000269" key="4">
    <source>
    </source>
</evidence>
<evidence type="ECO:0000269" key="5">
    <source>
    </source>
</evidence>
<evidence type="ECO:0000269" key="6">
    <source>
    </source>
</evidence>
<evidence type="ECO:0000305" key="7"/>
<feature type="initiator methionine" description="Removed" evidence="2">
    <location>
        <position position="1"/>
    </location>
</feature>
<feature type="chain" id="PRO_0000284499" description="Transmembrane protein 43">
    <location>
        <begin position="2"/>
        <end position="400"/>
    </location>
</feature>
<feature type="topological domain" description="Nuclear" evidence="3">
    <location>
        <begin position="2"/>
        <end position="31"/>
    </location>
</feature>
<feature type="transmembrane region" description="Helical" evidence="3">
    <location>
        <begin position="32"/>
        <end position="52"/>
    </location>
</feature>
<feature type="topological domain" description="Perinuclear space" evidence="3">
    <location>
        <begin position="53"/>
        <end position="313"/>
    </location>
</feature>
<feature type="transmembrane region" description="Helical" evidence="3">
    <location>
        <begin position="314"/>
        <end position="334"/>
    </location>
</feature>
<feature type="topological domain" description="Nuclear" evidence="3">
    <location>
        <begin position="335"/>
        <end position="345"/>
    </location>
</feature>
<feature type="transmembrane region" description="Helical" evidence="3">
    <location>
        <begin position="346"/>
        <end position="366"/>
    </location>
</feature>
<feature type="topological domain" description="Perinuclear space" evidence="3">
    <location>
        <begin position="367"/>
        <end position="368"/>
    </location>
</feature>
<feature type="transmembrane region" description="Helical" evidence="3">
    <location>
        <begin position="369"/>
        <end position="389"/>
    </location>
</feature>
<feature type="topological domain" description="Nuclear" evidence="3">
    <location>
        <begin position="390"/>
        <end position="400"/>
    </location>
</feature>
<feature type="modified residue" description="N-acetylalanine" evidence="2">
    <location>
        <position position="2"/>
    </location>
</feature>
<dbReference type="EMBL" id="AK004778">
    <property type="protein sequence ID" value="BAB23556.1"/>
    <property type="molecule type" value="mRNA"/>
</dbReference>
<dbReference type="EMBL" id="AK151693">
    <property type="protein sequence ID" value="BAE30617.1"/>
    <property type="molecule type" value="mRNA"/>
</dbReference>
<dbReference type="EMBL" id="AK151766">
    <property type="protein sequence ID" value="BAE30672.1"/>
    <property type="molecule type" value="mRNA"/>
</dbReference>
<dbReference type="EMBL" id="AK152078">
    <property type="protein sequence ID" value="BAE30929.1"/>
    <property type="molecule type" value="mRNA"/>
</dbReference>
<dbReference type="EMBL" id="AK168559">
    <property type="protein sequence ID" value="BAE40432.1"/>
    <property type="molecule type" value="mRNA"/>
</dbReference>
<dbReference type="EMBL" id="BC024933">
    <property type="protein sequence ID" value="AAH24933.1"/>
    <property type="molecule type" value="mRNA"/>
</dbReference>
<dbReference type="CCDS" id="CCDS20368.1"/>
<dbReference type="RefSeq" id="NP_083042.1">
    <property type="nucleotide sequence ID" value="NM_028766.3"/>
</dbReference>
<dbReference type="BioGRID" id="216508">
    <property type="interactions" value="4"/>
</dbReference>
<dbReference type="FunCoup" id="Q9DBS1">
    <property type="interactions" value="1955"/>
</dbReference>
<dbReference type="IntAct" id="Q9DBS1">
    <property type="interactions" value="2"/>
</dbReference>
<dbReference type="MINT" id="Q9DBS1"/>
<dbReference type="STRING" id="10090.ENSMUSP00000032183"/>
<dbReference type="GlyGen" id="Q9DBS1">
    <property type="glycosylation" value="1 site, 1 N-linked glycan (1 site)"/>
</dbReference>
<dbReference type="PhosphoSitePlus" id="Q9DBS1"/>
<dbReference type="SwissPalm" id="Q9DBS1"/>
<dbReference type="PaxDb" id="10090-ENSMUSP00000032183"/>
<dbReference type="PeptideAtlas" id="Q9DBS1"/>
<dbReference type="ProteomicsDB" id="259258"/>
<dbReference type="Pumba" id="Q9DBS1"/>
<dbReference type="TopDownProteomics" id="Q9DBS1"/>
<dbReference type="DNASU" id="74122"/>
<dbReference type="Ensembl" id="ENSMUST00000032183.6">
    <property type="protein sequence ID" value="ENSMUSP00000032183.5"/>
    <property type="gene ID" value="ENSMUSG00000030095.11"/>
</dbReference>
<dbReference type="GeneID" id="74122"/>
<dbReference type="KEGG" id="mmu:74122"/>
<dbReference type="UCSC" id="uc009cyc.1">
    <property type="organism name" value="mouse"/>
</dbReference>
<dbReference type="AGR" id="MGI:1921372"/>
<dbReference type="CTD" id="79188"/>
<dbReference type="MGI" id="MGI:1921372">
    <property type="gene designation" value="Tmem43"/>
</dbReference>
<dbReference type="VEuPathDB" id="HostDB:ENSMUSG00000030095"/>
<dbReference type="eggNOG" id="ENOG502QSR2">
    <property type="taxonomic scope" value="Eukaryota"/>
</dbReference>
<dbReference type="GeneTree" id="ENSGT00390000009671"/>
<dbReference type="HOGENOM" id="CLU_042602_1_0_1"/>
<dbReference type="InParanoid" id="Q9DBS1"/>
<dbReference type="OMA" id="NMMALDE"/>
<dbReference type="OrthoDB" id="410725at2759"/>
<dbReference type="PhylomeDB" id="Q9DBS1"/>
<dbReference type="TreeFam" id="TF324718"/>
<dbReference type="BioGRID-ORCS" id="74122">
    <property type="hits" value="3 hits in 78 CRISPR screens"/>
</dbReference>
<dbReference type="ChiTaRS" id="Tmem43">
    <property type="organism name" value="mouse"/>
</dbReference>
<dbReference type="PRO" id="PR:Q9DBS1"/>
<dbReference type="Proteomes" id="UP000000589">
    <property type="component" value="Chromosome 6"/>
</dbReference>
<dbReference type="RNAct" id="Q9DBS1">
    <property type="molecule type" value="protein"/>
</dbReference>
<dbReference type="Bgee" id="ENSMUSG00000030095">
    <property type="expression patterns" value="Expressed in thoracic mammary gland and 220 other cell types or tissues"/>
</dbReference>
<dbReference type="GO" id="GO:0005788">
    <property type="term" value="C:endoplasmic reticulum lumen"/>
    <property type="evidence" value="ECO:0000314"/>
    <property type="project" value="MGI"/>
</dbReference>
<dbReference type="GO" id="GO:0005789">
    <property type="term" value="C:endoplasmic reticulum membrane"/>
    <property type="evidence" value="ECO:0007669"/>
    <property type="project" value="UniProtKB-SubCell"/>
</dbReference>
<dbReference type="GO" id="GO:0005794">
    <property type="term" value="C:Golgi apparatus"/>
    <property type="evidence" value="ECO:0007669"/>
    <property type="project" value="Ensembl"/>
</dbReference>
<dbReference type="GO" id="GO:0005637">
    <property type="term" value="C:nuclear inner membrane"/>
    <property type="evidence" value="ECO:0000314"/>
    <property type="project" value="MGI"/>
</dbReference>
<dbReference type="GO" id="GO:0005886">
    <property type="term" value="C:plasma membrane"/>
    <property type="evidence" value="ECO:0007669"/>
    <property type="project" value="UniProtKB-SubCell"/>
</dbReference>
<dbReference type="GO" id="GO:0042802">
    <property type="term" value="F:identical protein binding"/>
    <property type="evidence" value="ECO:0000353"/>
    <property type="project" value="MGI"/>
</dbReference>
<dbReference type="GO" id="GO:0045087">
    <property type="term" value="P:innate immune response"/>
    <property type="evidence" value="ECO:0007669"/>
    <property type="project" value="UniProtKB-KW"/>
</dbReference>
<dbReference type="GO" id="GO:0071763">
    <property type="term" value="P:nuclear membrane organization"/>
    <property type="evidence" value="ECO:0000314"/>
    <property type="project" value="MGI"/>
</dbReference>
<dbReference type="InterPro" id="IPR012430">
    <property type="entry name" value="TMEM43_fam"/>
</dbReference>
<dbReference type="PANTHER" id="PTHR13416">
    <property type="match status" value="1"/>
</dbReference>
<dbReference type="PANTHER" id="PTHR13416:SF2">
    <property type="entry name" value="TRANSMEMBRANE PROTEIN 43"/>
    <property type="match status" value="1"/>
</dbReference>
<dbReference type="Pfam" id="PF07787">
    <property type="entry name" value="TMEM43"/>
    <property type="match status" value="1"/>
</dbReference>
<comment type="function">
    <text evidence="2 5 6">May have an important role in maintaining nuclear envelope structure by organizing protein complexes at the inner nuclear membrane. Required for retaining emerin at the inner nuclear membrane (PubMed:18230648). Plays a role in the modulation of innate immune signaling through the cGAS-STING pathway by interacting with RNF26. In addition, functions as a critical signaling component in mediating NF-kappa-B activation by acting downstream of EGFR and upstream of CARD10 (By similarity). Contributes to passive conductance current in cochlear glia-like supporting cells, mediated by gap junctions and necessary for hearing (PubMed:34050020).</text>
</comment>
<comment type="subunit">
    <text evidence="1 2 4 5">Can form oligomers through the transmembrane domains. Interacts with EMD; the interaction retains EMD at the inner nuclear membrane (PubMed:18230648). Interacts with LMNA and LMNB2 (PubMed:18230648). Interacts with SUN2. Interacts with RNF26; this interaction is important to modulate innate immune signaling through the cGAS-STING pathway. Interacts with CARD10. Interacts with gap junctions proteins GJB2/Cx26 and GJB4/Cx30 (By similarity).</text>
</comment>
<comment type="subcellular location">
    <subcellularLocation>
        <location evidence="2">Endoplasmic reticulum membrane</location>
    </subcellularLocation>
    <subcellularLocation>
        <location evidence="5">Nucleus inner membrane</location>
        <topology>Multi-pass membrane protein</topology>
    </subcellularLocation>
    <subcellularLocation>
        <location evidence="2">Cell membrane</location>
    </subcellularLocation>
    <text evidence="5">Retained in the inner nuclear membrane through interaction with EMD and A- and B-lamins. The N- and C-termini are oriented towards the nucleoplasm. The majority of the hydrophilic domain resides in the endoplasmic reticulum lumen.</text>
</comment>
<comment type="tissue specificity">
    <text evidence="6">Widely expressed, including in the cochlea, heart, eye, brain and kidney.</text>
</comment>
<comment type="developmental stage">
    <text evidence="6">In the cochlea, mainly expressed in the organ of Corti, along the entire cochlear length, at postnatal day 4 (P4) through P20. At P20, the expression becomes more restricted to the apical membrane of the inner border cells and the cell junctions of the inner sulcus cells. Throughout the early developmental period, up to P20, expression is mainly found at inner glia-like supporting cells of Kolliker's organ, while hair cell expression is comparably sparse. Expression in glia-like supporting cells is maintained in adulthood at 1, 2 and 4 months (at protein level).</text>
</comment>
<comment type="similarity">
    <text evidence="7">Belongs to the TMEM43 family.</text>
</comment>